<accession>Q9SJA7</accession>
<evidence type="ECO:0000250" key="1"/>
<evidence type="ECO:0000255" key="2"/>
<evidence type="ECO:0000305" key="3"/>
<protein>
    <recommendedName>
        <fullName>Probable sarcosine oxidase</fullName>
        <ecNumber>1.5.3.1</ecNumber>
    </recommendedName>
</protein>
<keyword id="KW-0274">FAD</keyword>
<keyword id="KW-0285">Flavoprotein</keyword>
<keyword id="KW-0560">Oxidoreductase</keyword>
<keyword id="KW-1185">Reference proteome</keyword>
<comment type="catalytic activity">
    <reaction>
        <text>sarcosine + O2 + H2O = formaldehyde + glycine + H2O2</text>
        <dbReference type="Rhea" id="RHEA:13313"/>
        <dbReference type="ChEBI" id="CHEBI:15377"/>
        <dbReference type="ChEBI" id="CHEBI:15379"/>
        <dbReference type="ChEBI" id="CHEBI:16240"/>
        <dbReference type="ChEBI" id="CHEBI:16842"/>
        <dbReference type="ChEBI" id="CHEBI:57305"/>
        <dbReference type="ChEBI" id="CHEBI:57433"/>
        <dbReference type="EC" id="1.5.3.1"/>
    </reaction>
</comment>
<comment type="cofactor">
    <cofactor evidence="1">
        <name>FAD</name>
        <dbReference type="ChEBI" id="CHEBI:57692"/>
    </cofactor>
    <text evidence="1">Binds 1 FAD per subunit.</text>
</comment>
<comment type="similarity">
    <text evidence="3">Belongs to the MSOX/MTOX family.</text>
</comment>
<proteinExistence type="evidence at transcript level"/>
<name>SOX_ARATH</name>
<feature type="chain" id="PRO_0000213777" description="Probable sarcosine oxidase">
    <location>
        <begin position="1"/>
        <end position="416"/>
    </location>
</feature>
<feature type="binding site" evidence="2">
    <location>
        <begin position="10"/>
        <end position="40"/>
    </location>
    <ligand>
        <name>FAD</name>
        <dbReference type="ChEBI" id="CHEBI:57692"/>
    </ligand>
</feature>
<feature type="modified residue" description="S-8alpha-FAD cysteine" evidence="3">
    <location>
        <position position="325"/>
    </location>
</feature>
<sequence>MEYSDDGRFDVIVVGAGVMGSSAAYQLAKRGQKTLLLEQFDFLHHRGSSHGESRTIRATYPEDYYYSMVSESTRLWAAAQSEIGYKVHFPTQQFDMGPADQQSLLSVVATCQKHGLAHRVMDSHAVSEHFSGRISIPENWIGVSTELGGIIKPTKAVSMFQTLAIGHGAILRDNTKVANIKRDGESGEGVIVCTVKGDKFYGKKCIVTAGAWISKLVKTVAGIDFPVEPLETTVCYWRIKEGHEEKFTIDGEFPTFASYGAPYVYGTPSLEYPGLIKVAVHGGYWCDPDKRPWGPGVKLEELKEWIKERFGGMVDSEGPVATQLCMYSMTPDEDFVIDFLGGEFGRDVVVGGGFSGHGFKMAPAVGRILADMAMEVEAGGGGVEMKQFSLRRFEDNPKGNAKEYPDQVILDVPLKH</sequence>
<dbReference type="EC" id="1.5.3.1"/>
<dbReference type="EMBL" id="AC006954">
    <property type="protein sequence ID" value="AAD23888.1"/>
    <property type="molecule type" value="Genomic_DNA"/>
</dbReference>
<dbReference type="EMBL" id="CP002685">
    <property type="protein sequence ID" value="AEC07594.1"/>
    <property type="molecule type" value="Genomic_DNA"/>
</dbReference>
<dbReference type="EMBL" id="AY065254">
    <property type="protein sequence ID" value="AAL38730.1"/>
    <property type="molecule type" value="mRNA"/>
</dbReference>
<dbReference type="EMBL" id="AY117247">
    <property type="protein sequence ID" value="AAM51322.1"/>
    <property type="molecule type" value="mRNA"/>
</dbReference>
<dbReference type="PIR" id="D84638">
    <property type="entry name" value="D84638"/>
</dbReference>
<dbReference type="RefSeq" id="NP_180034.1">
    <property type="nucleotide sequence ID" value="NM_128019.4"/>
</dbReference>
<dbReference type="SMR" id="Q9SJA7"/>
<dbReference type="BioGRID" id="2346">
    <property type="interactions" value="1"/>
</dbReference>
<dbReference type="FunCoup" id="Q9SJA7">
    <property type="interactions" value="489"/>
</dbReference>
<dbReference type="IntAct" id="Q9SJA7">
    <property type="interactions" value="1"/>
</dbReference>
<dbReference type="STRING" id="3702.Q9SJA7"/>
<dbReference type="PaxDb" id="3702-AT2G24580.1"/>
<dbReference type="ProteomicsDB" id="245331"/>
<dbReference type="EnsemblPlants" id="AT2G24580.1">
    <property type="protein sequence ID" value="AT2G24580.1"/>
    <property type="gene ID" value="AT2G24580"/>
</dbReference>
<dbReference type="GeneID" id="816994"/>
<dbReference type="Gramene" id="AT2G24580.1">
    <property type="protein sequence ID" value="AT2G24580.1"/>
    <property type="gene ID" value="AT2G24580"/>
</dbReference>
<dbReference type="KEGG" id="ath:AT2G24580"/>
<dbReference type="Araport" id="AT2G24580"/>
<dbReference type="TAIR" id="AT2G24580"/>
<dbReference type="eggNOG" id="KOG2820">
    <property type="taxonomic scope" value="Eukaryota"/>
</dbReference>
<dbReference type="HOGENOM" id="CLU_007884_2_2_1"/>
<dbReference type="InParanoid" id="Q9SJA7"/>
<dbReference type="OMA" id="WPMLWAH"/>
<dbReference type="OrthoDB" id="424974at2759"/>
<dbReference type="PhylomeDB" id="Q9SJA7"/>
<dbReference type="BioCyc" id="ARA:AT2G24580-MONOMER"/>
<dbReference type="PRO" id="PR:Q9SJA7"/>
<dbReference type="Proteomes" id="UP000006548">
    <property type="component" value="Chromosome 2"/>
</dbReference>
<dbReference type="ExpressionAtlas" id="Q9SJA7">
    <property type="expression patterns" value="baseline and differential"/>
</dbReference>
<dbReference type="GO" id="GO:0050660">
    <property type="term" value="F:flavin adenine dinucleotide binding"/>
    <property type="evidence" value="ECO:0007669"/>
    <property type="project" value="InterPro"/>
</dbReference>
<dbReference type="GO" id="GO:0008115">
    <property type="term" value="F:sarcosine oxidase activity"/>
    <property type="evidence" value="ECO:0000314"/>
    <property type="project" value="TAIR"/>
</dbReference>
<dbReference type="Gene3D" id="3.30.9.10">
    <property type="entry name" value="D-Amino Acid Oxidase, subunit A, domain 2"/>
    <property type="match status" value="1"/>
</dbReference>
<dbReference type="Gene3D" id="3.50.50.60">
    <property type="entry name" value="FAD/NAD(P)-binding domain"/>
    <property type="match status" value="1"/>
</dbReference>
<dbReference type="InterPro" id="IPR006076">
    <property type="entry name" value="FAD-dep_OxRdtase"/>
</dbReference>
<dbReference type="InterPro" id="IPR036188">
    <property type="entry name" value="FAD/NAD-bd_sf"/>
</dbReference>
<dbReference type="InterPro" id="IPR045170">
    <property type="entry name" value="MTOX"/>
</dbReference>
<dbReference type="NCBIfam" id="TIGR01377">
    <property type="entry name" value="soxA_mon"/>
    <property type="match status" value="1"/>
</dbReference>
<dbReference type="PANTHER" id="PTHR10961:SF7">
    <property type="entry name" value="FAD DEPENDENT OXIDOREDUCTASE DOMAIN-CONTAINING PROTEIN"/>
    <property type="match status" value="1"/>
</dbReference>
<dbReference type="PANTHER" id="PTHR10961">
    <property type="entry name" value="PEROXISOMAL SARCOSINE OXIDASE"/>
    <property type="match status" value="1"/>
</dbReference>
<dbReference type="Pfam" id="PF01266">
    <property type="entry name" value="DAO"/>
    <property type="match status" value="1"/>
</dbReference>
<dbReference type="SUPFAM" id="SSF54373">
    <property type="entry name" value="FAD-linked reductases, C-terminal domain"/>
    <property type="match status" value="1"/>
</dbReference>
<dbReference type="SUPFAM" id="SSF51905">
    <property type="entry name" value="FAD/NAD(P)-binding domain"/>
    <property type="match status" value="1"/>
</dbReference>
<organism>
    <name type="scientific">Arabidopsis thaliana</name>
    <name type="common">Mouse-ear cress</name>
    <dbReference type="NCBI Taxonomy" id="3702"/>
    <lineage>
        <taxon>Eukaryota</taxon>
        <taxon>Viridiplantae</taxon>
        <taxon>Streptophyta</taxon>
        <taxon>Embryophyta</taxon>
        <taxon>Tracheophyta</taxon>
        <taxon>Spermatophyta</taxon>
        <taxon>Magnoliopsida</taxon>
        <taxon>eudicotyledons</taxon>
        <taxon>Gunneridae</taxon>
        <taxon>Pentapetalae</taxon>
        <taxon>rosids</taxon>
        <taxon>malvids</taxon>
        <taxon>Brassicales</taxon>
        <taxon>Brassicaceae</taxon>
        <taxon>Camelineae</taxon>
        <taxon>Arabidopsis</taxon>
    </lineage>
</organism>
<reference key="1">
    <citation type="journal article" date="1999" name="Nature">
        <title>Sequence and analysis of chromosome 2 of the plant Arabidopsis thaliana.</title>
        <authorList>
            <person name="Lin X."/>
            <person name="Kaul S."/>
            <person name="Rounsley S.D."/>
            <person name="Shea T.P."/>
            <person name="Benito M.-I."/>
            <person name="Town C.D."/>
            <person name="Fujii C.Y."/>
            <person name="Mason T.M."/>
            <person name="Bowman C.L."/>
            <person name="Barnstead M.E."/>
            <person name="Feldblyum T.V."/>
            <person name="Buell C.R."/>
            <person name="Ketchum K.A."/>
            <person name="Lee J.J."/>
            <person name="Ronning C.M."/>
            <person name="Koo H.L."/>
            <person name="Moffat K.S."/>
            <person name="Cronin L.A."/>
            <person name="Shen M."/>
            <person name="Pai G."/>
            <person name="Van Aken S."/>
            <person name="Umayam L."/>
            <person name="Tallon L.J."/>
            <person name="Gill J.E."/>
            <person name="Adams M.D."/>
            <person name="Carrera A.J."/>
            <person name="Creasy T.H."/>
            <person name="Goodman H.M."/>
            <person name="Somerville C.R."/>
            <person name="Copenhaver G.P."/>
            <person name="Preuss D."/>
            <person name="Nierman W.C."/>
            <person name="White O."/>
            <person name="Eisen J.A."/>
            <person name="Salzberg S.L."/>
            <person name="Fraser C.M."/>
            <person name="Venter J.C."/>
        </authorList>
    </citation>
    <scope>NUCLEOTIDE SEQUENCE [LARGE SCALE GENOMIC DNA]</scope>
    <source>
        <strain>cv. Columbia</strain>
    </source>
</reference>
<reference key="2">
    <citation type="journal article" date="2017" name="Plant J.">
        <title>Araport11: a complete reannotation of the Arabidopsis thaliana reference genome.</title>
        <authorList>
            <person name="Cheng C.Y."/>
            <person name="Krishnakumar V."/>
            <person name="Chan A.P."/>
            <person name="Thibaud-Nissen F."/>
            <person name="Schobel S."/>
            <person name="Town C.D."/>
        </authorList>
    </citation>
    <scope>GENOME REANNOTATION</scope>
    <source>
        <strain>cv. Columbia</strain>
    </source>
</reference>
<reference key="3">
    <citation type="journal article" date="2003" name="Science">
        <title>Empirical analysis of transcriptional activity in the Arabidopsis genome.</title>
        <authorList>
            <person name="Yamada K."/>
            <person name="Lim J."/>
            <person name="Dale J.M."/>
            <person name="Chen H."/>
            <person name="Shinn P."/>
            <person name="Palm C.J."/>
            <person name="Southwick A.M."/>
            <person name="Wu H.C."/>
            <person name="Kim C.J."/>
            <person name="Nguyen M."/>
            <person name="Pham P.K."/>
            <person name="Cheuk R.F."/>
            <person name="Karlin-Newmann G."/>
            <person name="Liu S.X."/>
            <person name="Lam B."/>
            <person name="Sakano H."/>
            <person name="Wu T."/>
            <person name="Yu G."/>
            <person name="Miranda M."/>
            <person name="Quach H.L."/>
            <person name="Tripp M."/>
            <person name="Chang C.H."/>
            <person name="Lee J.M."/>
            <person name="Toriumi M.J."/>
            <person name="Chan M.M."/>
            <person name="Tang C.C."/>
            <person name="Onodera C.S."/>
            <person name="Deng J.M."/>
            <person name="Akiyama K."/>
            <person name="Ansari Y."/>
            <person name="Arakawa T."/>
            <person name="Banh J."/>
            <person name="Banno F."/>
            <person name="Bowser L."/>
            <person name="Brooks S.Y."/>
            <person name="Carninci P."/>
            <person name="Chao Q."/>
            <person name="Choy N."/>
            <person name="Enju A."/>
            <person name="Goldsmith A.D."/>
            <person name="Gurjal M."/>
            <person name="Hansen N.F."/>
            <person name="Hayashizaki Y."/>
            <person name="Johnson-Hopson C."/>
            <person name="Hsuan V.W."/>
            <person name="Iida K."/>
            <person name="Karnes M."/>
            <person name="Khan S."/>
            <person name="Koesema E."/>
            <person name="Ishida J."/>
            <person name="Jiang P.X."/>
            <person name="Jones T."/>
            <person name="Kawai J."/>
            <person name="Kamiya A."/>
            <person name="Meyers C."/>
            <person name="Nakajima M."/>
            <person name="Narusaka M."/>
            <person name="Seki M."/>
            <person name="Sakurai T."/>
            <person name="Satou M."/>
            <person name="Tamse R."/>
            <person name="Vaysberg M."/>
            <person name="Wallender E.K."/>
            <person name="Wong C."/>
            <person name="Yamamura Y."/>
            <person name="Yuan S."/>
            <person name="Shinozaki K."/>
            <person name="Davis R.W."/>
            <person name="Theologis A."/>
            <person name="Ecker J.R."/>
        </authorList>
    </citation>
    <scope>NUCLEOTIDE SEQUENCE [LARGE SCALE MRNA]</scope>
    <source>
        <strain>cv. Columbia</strain>
    </source>
</reference>
<gene>
    <name type="ordered locus">At2g24580</name>
    <name type="ORF">F25P17.12</name>
</gene>